<proteinExistence type="inferred from homology"/>
<gene>
    <name evidence="1" type="primary">metK</name>
    <name type="ordered locus">TM1040_0193</name>
</gene>
<comment type="function">
    <text evidence="1">Catalyzes the formation of S-adenosylmethionine (AdoMet) from methionine and ATP. The overall synthetic reaction is composed of two sequential steps, AdoMet formation and the subsequent tripolyphosphate hydrolysis which occurs prior to release of AdoMet from the enzyme.</text>
</comment>
<comment type="catalytic activity">
    <reaction evidence="1">
        <text>L-methionine + ATP + H2O = S-adenosyl-L-methionine + phosphate + diphosphate</text>
        <dbReference type="Rhea" id="RHEA:21080"/>
        <dbReference type="ChEBI" id="CHEBI:15377"/>
        <dbReference type="ChEBI" id="CHEBI:30616"/>
        <dbReference type="ChEBI" id="CHEBI:33019"/>
        <dbReference type="ChEBI" id="CHEBI:43474"/>
        <dbReference type="ChEBI" id="CHEBI:57844"/>
        <dbReference type="ChEBI" id="CHEBI:59789"/>
        <dbReference type="EC" id="2.5.1.6"/>
    </reaction>
</comment>
<comment type="cofactor">
    <cofactor evidence="1">
        <name>Mg(2+)</name>
        <dbReference type="ChEBI" id="CHEBI:18420"/>
    </cofactor>
    <text evidence="1">Binds 2 divalent ions per subunit.</text>
</comment>
<comment type="cofactor">
    <cofactor evidence="1">
        <name>K(+)</name>
        <dbReference type="ChEBI" id="CHEBI:29103"/>
    </cofactor>
    <text evidence="1">Binds 1 potassium ion per subunit.</text>
</comment>
<comment type="pathway">
    <text evidence="1">Amino-acid biosynthesis; S-adenosyl-L-methionine biosynthesis; S-adenosyl-L-methionine from L-methionine: step 1/1.</text>
</comment>
<comment type="subunit">
    <text evidence="1">Homotetramer; dimer of dimers.</text>
</comment>
<comment type="subcellular location">
    <subcellularLocation>
        <location evidence="1">Cytoplasm</location>
    </subcellularLocation>
</comment>
<comment type="similarity">
    <text evidence="1">Belongs to the AdoMet synthase family.</text>
</comment>
<accession>Q1GK90</accession>
<dbReference type="EC" id="2.5.1.6" evidence="1"/>
<dbReference type="EMBL" id="CP000377">
    <property type="protein sequence ID" value="ABF62926.1"/>
    <property type="molecule type" value="Genomic_DNA"/>
</dbReference>
<dbReference type="RefSeq" id="WP_011537561.1">
    <property type="nucleotide sequence ID" value="NC_008044.1"/>
</dbReference>
<dbReference type="SMR" id="Q1GK90"/>
<dbReference type="STRING" id="292414.TM1040_0193"/>
<dbReference type="KEGG" id="sit:TM1040_0193"/>
<dbReference type="eggNOG" id="COG0192">
    <property type="taxonomic scope" value="Bacteria"/>
</dbReference>
<dbReference type="HOGENOM" id="CLU_041802_1_1_5"/>
<dbReference type="OrthoDB" id="9801686at2"/>
<dbReference type="UniPathway" id="UPA00315">
    <property type="reaction ID" value="UER00080"/>
</dbReference>
<dbReference type="Proteomes" id="UP000000636">
    <property type="component" value="Chromosome"/>
</dbReference>
<dbReference type="GO" id="GO:0005737">
    <property type="term" value="C:cytoplasm"/>
    <property type="evidence" value="ECO:0007669"/>
    <property type="project" value="UniProtKB-SubCell"/>
</dbReference>
<dbReference type="GO" id="GO:0005524">
    <property type="term" value="F:ATP binding"/>
    <property type="evidence" value="ECO:0007669"/>
    <property type="project" value="UniProtKB-UniRule"/>
</dbReference>
<dbReference type="GO" id="GO:0000287">
    <property type="term" value="F:magnesium ion binding"/>
    <property type="evidence" value="ECO:0007669"/>
    <property type="project" value="UniProtKB-UniRule"/>
</dbReference>
<dbReference type="GO" id="GO:0004478">
    <property type="term" value="F:methionine adenosyltransferase activity"/>
    <property type="evidence" value="ECO:0007669"/>
    <property type="project" value="UniProtKB-UniRule"/>
</dbReference>
<dbReference type="GO" id="GO:0006730">
    <property type="term" value="P:one-carbon metabolic process"/>
    <property type="evidence" value="ECO:0007669"/>
    <property type="project" value="UniProtKB-KW"/>
</dbReference>
<dbReference type="GO" id="GO:0006556">
    <property type="term" value="P:S-adenosylmethionine biosynthetic process"/>
    <property type="evidence" value="ECO:0007669"/>
    <property type="project" value="UniProtKB-UniRule"/>
</dbReference>
<dbReference type="CDD" id="cd18079">
    <property type="entry name" value="S-AdoMet_synt"/>
    <property type="match status" value="1"/>
</dbReference>
<dbReference type="FunFam" id="3.30.300.10:FF:000003">
    <property type="entry name" value="S-adenosylmethionine synthase"/>
    <property type="match status" value="1"/>
</dbReference>
<dbReference type="Gene3D" id="3.30.300.10">
    <property type="match status" value="3"/>
</dbReference>
<dbReference type="HAMAP" id="MF_00086">
    <property type="entry name" value="S_AdoMet_synth1"/>
    <property type="match status" value="1"/>
</dbReference>
<dbReference type="InterPro" id="IPR022631">
    <property type="entry name" value="ADOMET_SYNTHASE_CS"/>
</dbReference>
<dbReference type="InterPro" id="IPR022630">
    <property type="entry name" value="S-AdoMet_synt_C"/>
</dbReference>
<dbReference type="InterPro" id="IPR022629">
    <property type="entry name" value="S-AdoMet_synt_central"/>
</dbReference>
<dbReference type="InterPro" id="IPR022628">
    <property type="entry name" value="S-AdoMet_synt_N"/>
</dbReference>
<dbReference type="InterPro" id="IPR002133">
    <property type="entry name" value="S-AdoMet_synthetase"/>
</dbReference>
<dbReference type="InterPro" id="IPR022636">
    <property type="entry name" value="S-AdoMet_synthetase_sfam"/>
</dbReference>
<dbReference type="NCBIfam" id="TIGR01034">
    <property type="entry name" value="metK"/>
    <property type="match status" value="1"/>
</dbReference>
<dbReference type="PANTHER" id="PTHR11964">
    <property type="entry name" value="S-ADENOSYLMETHIONINE SYNTHETASE"/>
    <property type="match status" value="1"/>
</dbReference>
<dbReference type="Pfam" id="PF02773">
    <property type="entry name" value="S-AdoMet_synt_C"/>
    <property type="match status" value="1"/>
</dbReference>
<dbReference type="Pfam" id="PF02772">
    <property type="entry name" value="S-AdoMet_synt_M"/>
    <property type="match status" value="1"/>
</dbReference>
<dbReference type="Pfam" id="PF00438">
    <property type="entry name" value="S-AdoMet_synt_N"/>
    <property type="match status" value="1"/>
</dbReference>
<dbReference type="PIRSF" id="PIRSF000497">
    <property type="entry name" value="MAT"/>
    <property type="match status" value="1"/>
</dbReference>
<dbReference type="SUPFAM" id="SSF55973">
    <property type="entry name" value="S-adenosylmethionine synthetase"/>
    <property type="match status" value="3"/>
</dbReference>
<dbReference type="PROSITE" id="PS00376">
    <property type="entry name" value="ADOMET_SYNTHASE_1"/>
    <property type="match status" value="1"/>
</dbReference>
<dbReference type="PROSITE" id="PS00377">
    <property type="entry name" value="ADOMET_SYNTHASE_2"/>
    <property type="match status" value="1"/>
</dbReference>
<evidence type="ECO:0000255" key="1">
    <source>
        <dbReference type="HAMAP-Rule" id="MF_00086"/>
    </source>
</evidence>
<feature type="chain" id="PRO_0000302983" description="S-adenosylmethionine synthase">
    <location>
        <begin position="1"/>
        <end position="393"/>
    </location>
</feature>
<feature type="region of interest" description="Flexible loop" evidence="1">
    <location>
        <begin position="106"/>
        <end position="116"/>
    </location>
</feature>
<feature type="binding site" description="in other chain" evidence="1">
    <location>
        <position position="17"/>
    </location>
    <ligand>
        <name>ATP</name>
        <dbReference type="ChEBI" id="CHEBI:30616"/>
        <note>ligand shared between two neighboring subunits</note>
    </ligand>
</feature>
<feature type="binding site" evidence="1">
    <location>
        <position position="19"/>
    </location>
    <ligand>
        <name>Mg(2+)</name>
        <dbReference type="ChEBI" id="CHEBI:18420"/>
    </ligand>
</feature>
<feature type="binding site" evidence="1">
    <location>
        <position position="45"/>
    </location>
    <ligand>
        <name>K(+)</name>
        <dbReference type="ChEBI" id="CHEBI:29103"/>
    </ligand>
</feature>
<feature type="binding site" description="in other chain" evidence="1">
    <location>
        <position position="58"/>
    </location>
    <ligand>
        <name>L-methionine</name>
        <dbReference type="ChEBI" id="CHEBI:57844"/>
        <note>ligand shared between two neighboring subunits</note>
    </ligand>
</feature>
<feature type="binding site" description="in other chain" evidence="1">
    <location>
        <position position="106"/>
    </location>
    <ligand>
        <name>L-methionine</name>
        <dbReference type="ChEBI" id="CHEBI:57844"/>
        <note>ligand shared between two neighboring subunits</note>
    </ligand>
</feature>
<feature type="binding site" description="in other chain" evidence="1">
    <location>
        <begin position="171"/>
        <end position="173"/>
    </location>
    <ligand>
        <name>ATP</name>
        <dbReference type="ChEBI" id="CHEBI:30616"/>
        <note>ligand shared between two neighboring subunits</note>
    </ligand>
</feature>
<feature type="binding site" description="in other chain" evidence="1">
    <location>
        <begin position="237"/>
        <end position="238"/>
    </location>
    <ligand>
        <name>ATP</name>
        <dbReference type="ChEBI" id="CHEBI:30616"/>
        <note>ligand shared between two neighboring subunits</note>
    </ligand>
</feature>
<feature type="binding site" evidence="1">
    <location>
        <position position="246"/>
    </location>
    <ligand>
        <name>ATP</name>
        <dbReference type="ChEBI" id="CHEBI:30616"/>
        <note>ligand shared between two neighboring subunits</note>
    </ligand>
</feature>
<feature type="binding site" evidence="1">
    <location>
        <position position="246"/>
    </location>
    <ligand>
        <name>L-methionine</name>
        <dbReference type="ChEBI" id="CHEBI:57844"/>
        <note>ligand shared between two neighboring subunits</note>
    </ligand>
</feature>
<feature type="binding site" description="in other chain" evidence="1">
    <location>
        <begin position="252"/>
        <end position="253"/>
    </location>
    <ligand>
        <name>ATP</name>
        <dbReference type="ChEBI" id="CHEBI:30616"/>
        <note>ligand shared between two neighboring subunits</note>
    </ligand>
</feature>
<feature type="binding site" evidence="1">
    <location>
        <position position="269"/>
    </location>
    <ligand>
        <name>ATP</name>
        <dbReference type="ChEBI" id="CHEBI:30616"/>
        <note>ligand shared between two neighboring subunits</note>
    </ligand>
</feature>
<feature type="binding site" evidence="1">
    <location>
        <position position="273"/>
    </location>
    <ligand>
        <name>ATP</name>
        <dbReference type="ChEBI" id="CHEBI:30616"/>
        <note>ligand shared between two neighboring subunits</note>
    </ligand>
</feature>
<feature type="binding site" description="in other chain" evidence="1">
    <location>
        <position position="277"/>
    </location>
    <ligand>
        <name>L-methionine</name>
        <dbReference type="ChEBI" id="CHEBI:57844"/>
        <note>ligand shared between two neighboring subunits</note>
    </ligand>
</feature>
<name>METK_RUEST</name>
<organism>
    <name type="scientific">Ruegeria sp. (strain TM1040)</name>
    <name type="common">Silicibacter sp.</name>
    <dbReference type="NCBI Taxonomy" id="292414"/>
    <lineage>
        <taxon>Bacteria</taxon>
        <taxon>Pseudomonadati</taxon>
        <taxon>Pseudomonadota</taxon>
        <taxon>Alphaproteobacteria</taxon>
        <taxon>Rhodobacterales</taxon>
        <taxon>Roseobacteraceae</taxon>
        <taxon>Ruegeria</taxon>
    </lineage>
</organism>
<sequence>MSRTNYTFTSESVSEGHPDKVCDRISDAVLDALIAEEPEARVAAETFATTNRVVIGGEVGLSDQAKLKDYMGKIDEIARACIKDIGYEQDKFHHETVEITNLLHEQSAHIAQGVDAAGDKDEGAGDQGIMFGFATDETDALMPAPIQFSHAILRRLAEVRKNGTLPVLGPDAKSQISVRYDAGKPVEVTSLVLSTQHLDEKLTSADIRALVEPYIRETLPEGWLTDNTVWHVNPTGKFVIGGPDGDAGLTGRKIIVDTYGGAAPHGGGAFSGKDPTKVDRSAAYAARYLAKNVVAAGLAHKCTLQLSYAIGVAAPLSIYVNTHDTGAVPDENIETAIRKCMDLTPRGIRTHLGLNKPIYQRTAAYGHFGRAPEADGGFSWERTDLTEALKGAV</sequence>
<reference key="1">
    <citation type="submission" date="2006-05" db="EMBL/GenBank/DDBJ databases">
        <title>Complete sequence of chromosome of Silicibacter sp. TM1040.</title>
        <authorList>
            <consortium name="US DOE Joint Genome Institute"/>
            <person name="Copeland A."/>
            <person name="Lucas S."/>
            <person name="Lapidus A."/>
            <person name="Barry K."/>
            <person name="Detter J.C."/>
            <person name="Glavina del Rio T."/>
            <person name="Hammon N."/>
            <person name="Israni S."/>
            <person name="Dalin E."/>
            <person name="Tice H."/>
            <person name="Pitluck S."/>
            <person name="Brettin T."/>
            <person name="Bruce D."/>
            <person name="Han C."/>
            <person name="Tapia R."/>
            <person name="Goodwin L."/>
            <person name="Thompson L.S."/>
            <person name="Gilna P."/>
            <person name="Schmutz J."/>
            <person name="Larimer F."/>
            <person name="Land M."/>
            <person name="Hauser L."/>
            <person name="Kyrpides N."/>
            <person name="Kim E."/>
            <person name="Belas R."/>
            <person name="Moran M.A."/>
            <person name="Buchan A."/>
            <person name="Gonzalez J.M."/>
            <person name="Schell M.A."/>
            <person name="Sun F."/>
            <person name="Richardson P."/>
        </authorList>
    </citation>
    <scope>NUCLEOTIDE SEQUENCE [LARGE SCALE GENOMIC DNA]</scope>
    <source>
        <strain>TM1040</strain>
    </source>
</reference>
<keyword id="KW-0067">ATP-binding</keyword>
<keyword id="KW-0963">Cytoplasm</keyword>
<keyword id="KW-0460">Magnesium</keyword>
<keyword id="KW-0479">Metal-binding</keyword>
<keyword id="KW-0547">Nucleotide-binding</keyword>
<keyword id="KW-0554">One-carbon metabolism</keyword>
<keyword id="KW-0630">Potassium</keyword>
<keyword id="KW-1185">Reference proteome</keyword>
<keyword id="KW-0808">Transferase</keyword>
<protein>
    <recommendedName>
        <fullName evidence="1">S-adenosylmethionine synthase</fullName>
        <shortName evidence="1">AdoMet synthase</shortName>
        <ecNumber evidence="1">2.5.1.6</ecNumber>
    </recommendedName>
    <alternativeName>
        <fullName evidence="1">MAT</fullName>
    </alternativeName>
    <alternativeName>
        <fullName evidence="1">Methionine adenosyltransferase</fullName>
    </alternativeName>
</protein>